<protein>
    <recommendedName>
        <fullName evidence="1">Glycine dehydrogenase (decarboxylating)</fullName>
        <ecNumber evidence="1">1.4.4.2</ecNumber>
    </recommendedName>
    <alternativeName>
        <fullName evidence="1">Glycine cleavage system P-protein</fullName>
    </alternativeName>
    <alternativeName>
        <fullName evidence="1">Glycine decarboxylase</fullName>
    </alternativeName>
    <alternativeName>
        <fullName evidence="1">Glycine dehydrogenase (aminomethyl-transferring)</fullName>
    </alternativeName>
</protein>
<comment type="function">
    <text evidence="1">The glycine cleavage system catalyzes the degradation of glycine. The P protein binds the alpha-amino group of glycine through its pyridoxal phosphate cofactor; CO(2) is released and the remaining methylamine moiety is then transferred to the lipoamide cofactor of the H protein.</text>
</comment>
<comment type="catalytic activity">
    <reaction evidence="1">
        <text>N(6)-[(R)-lipoyl]-L-lysyl-[glycine-cleavage complex H protein] + glycine + H(+) = N(6)-[(R)-S(8)-aminomethyldihydrolipoyl]-L-lysyl-[glycine-cleavage complex H protein] + CO2</text>
        <dbReference type="Rhea" id="RHEA:24304"/>
        <dbReference type="Rhea" id="RHEA-COMP:10494"/>
        <dbReference type="Rhea" id="RHEA-COMP:10495"/>
        <dbReference type="ChEBI" id="CHEBI:15378"/>
        <dbReference type="ChEBI" id="CHEBI:16526"/>
        <dbReference type="ChEBI" id="CHEBI:57305"/>
        <dbReference type="ChEBI" id="CHEBI:83099"/>
        <dbReference type="ChEBI" id="CHEBI:83143"/>
        <dbReference type="EC" id="1.4.4.2"/>
    </reaction>
</comment>
<comment type="cofactor">
    <cofactor evidence="1">
        <name>pyridoxal 5'-phosphate</name>
        <dbReference type="ChEBI" id="CHEBI:597326"/>
    </cofactor>
</comment>
<comment type="subunit">
    <text evidence="1">The glycine cleavage system is composed of four proteins: P, T, L and H.</text>
</comment>
<comment type="similarity">
    <text evidence="1">Belongs to the GcvP family.</text>
</comment>
<sequence>MTKQTLTQLEQHDLFLRRHIGPDSSQQQEMLNYVGAESLDDLTAQIVPESIRLSQELSIGDSCGEAEGIAYIRGLAKQNQVFKSYIGMGYYGTQVPNVILRNVFENPGWYTAYTPYQPEIAQGRLEAILNFQQVSMDLTGLDLASASLLDEATAAAEAMALAKRVSKAKKANIFFVADDVFPQTLDVVKTRAECFGFEVVVGPAHEAVNHELFGALFQYSNRFGQITDFTDLFAELRAKNVIVTVAADIMALVLLKSPGAMGADVVFGSAQRFGVPMGFGGPHAAFFVARDEHKRSMPGRIIGVSKDTRGNRALRMAMQTREQHIRREKANSNICTAQILLANMASFYAVFHGPQGLKTIASRINRFTDILAAGLQAKGVSLVNNTWFDTISIKGLDVAAVNARALAAEMNLRFDADGIVGVSLDETTIRTDIEALFDVILGAGHGLDVAALDAQIVAQGSQSIPASLVRQDAILSHPTFNRYQSETEMMRYIKRLESKDLALNYSMISLGSCTMKLNAAVEMIPVSWPEFANMHPFCPLDQAKGYTQLIEELSSWLVNVTGYDAVCIQPNSGAQGEYAGLLAIRKYHESRGEAHRNICLIPQSAHGTNPASAQLAGMQVVVTACDKQGNVDLEDLKAKAAEVAENLSCIMITYPSTHGVYEESIREICNIVHQHGGQVYLDGANMNAQVGLTSPGFIGADVSHLNLHKTFAIPHGGGGPGMGPIGVKAHLAPFVAGHVVVKPGRESDNNGAVSAAPYGSAGILPISWMYIKLLGSNGLKKSTQTALLNANYVMKKLSEHYPVLFRGRNDRVAHECIIDLRPIKEASGVTEMDIAKRLNDYGFHAPTMSFPVAGTLMIEPTESESKVELDRFIDAMVSIRAEIAKVEAGEWPADNNPLHNAPHTMADIMDPAFDSRPYSREVAVFPSAAVRTNKFWPTVNRIDDVYGDRNLFCACVPLSDYE</sequence>
<reference key="1">
    <citation type="submission" date="2006-09" db="EMBL/GenBank/DDBJ databases">
        <title>Complete sequence of chromosome 1 of Shewanella sp. ANA-3.</title>
        <authorList>
            <person name="Copeland A."/>
            <person name="Lucas S."/>
            <person name="Lapidus A."/>
            <person name="Barry K."/>
            <person name="Detter J.C."/>
            <person name="Glavina del Rio T."/>
            <person name="Hammon N."/>
            <person name="Israni S."/>
            <person name="Dalin E."/>
            <person name="Tice H."/>
            <person name="Pitluck S."/>
            <person name="Chertkov O."/>
            <person name="Brettin T."/>
            <person name="Bruce D."/>
            <person name="Han C."/>
            <person name="Tapia R."/>
            <person name="Gilna P."/>
            <person name="Schmutz J."/>
            <person name="Larimer F."/>
            <person name="Land M."/>
            <person name="Hauser L."/>
            <person name="Kyrpides N."/>
            <person name="Kim E."/>
            <person name="Newman D."/>
            <person name="Salticov C."/>
            <person name="Konstantinidis K."/>
            <person name="Klappenback J."/>
            <person name="Tiedje J."/>
            <person name="Richardson P."/>
        </authorList>
    </citation>
    <scope>NUCLEOTIDE SEQUENCE [LARGE SCALE GENOMIC DNA]</scope>
    <source>
        <strain>ANA-3</strain>
    </source>
</reference>
<proteinExistence type="inferred from homology"/>
<organism>
    <name type="scientific">Shewanella sp. (strain ANA-3)</name>
    <dbReference type="NCBI Taxonomy" id="94122"/>
    <lineage>
        <taxon>Bacteria</taxon>
        <taxon>Pseudomonadati</taxon>
        <taxon>Pseudomonadota</taxon>
        <taxon>Gammaproteobacteria</taxon>
        <taxon>Alteromonadales</taxon>
        <taxon>Shewanellaceae</taxon>
        <taxon>Shewanella</taxon>
    </lineage>
</organism>
<feature type="chain" id="PRO_1000045612" description="Glycine dehydrogenase (decarboxylating)">
    <location>
        <begin position="1"/>
        <end position="962"/>
    </location>
</feature>
<feature type="modified residue" description="N6-(pyridoxal phosphate)lysine" evidence="1">
    <location>
        <position position="709"/>
    </location>
</feature>
<gene>
    <name evidence="1" type="primary">gcvP</name>
    <name type="ordered locus">Shewana3_3499</name>
</gene>
<name>GCSP_SHESA</name>
<dbReference type="EC" id="1.4.4.2" evidence="1"/>
<dbReference type="EMBL" id="CP000469">
    <property type="protein sequence ID" value="ABK49722.1"/>
    <property type="molecule type" value="Genomic_DNA"/>
</dbReference>
<dbReference type="RefSeq" id="WP_011718287.1">
    <property type="nucleotide sequence ID" value="NC_008577.1"/>
</dbReference>
<dbReference type="SMR" id="A0L103"/>
<dbReference type="STRING" id="94122.Shewana3_3499"/>
<dbReference type="KEGG" id="shn:Shewana3_3499"/>
<dbReference type="eggNOG" id="COG0403">
    <property type="taxonomic scope" value="Bacteria"/>
</dbReference>
<dbReference type="eggNOG" id="COG1003">
    <property type="taxonomic scope" value="Bacteria"/>
</dbReference>
<dbReference type="HOGENOM" id="CLU_004620_1_1_6"/>
<dbReference type="OrthoDB" id="9801272at2"/>
<dbReference type="Proteomes" id="UP000002589">
    <property type="component" value="Chromosome"/>
</dbReference>
<dbReference type="GO" id="GO:0005829">
    <property type="term" value="C:cytosol"/>
    <property type="evidence" value="ECO:0007669"/>
    <property type="project" value="TreeGrafter"/>
</dbReference>
<dbReference type="GO" id="GO:0005960">
    <property type="term" value="C:glycine cleavage complex"/>
    <property type="evidence" value="ECO:0007669"/>
    <property type="project" value="TreeGrafter"/>
</dbReference>
<dbReference type="GO" id="GO:0016594">
    <property type="term" value="F:glycine binding"/>
    <property type="evidence" value="ECO:0007669"/>
    <property type="project" value="TreeGrafter"/>
</dbReference>
<dbReference type="GO" id="GO:0004375">
    <property type="term" value="F:glycine dehydrogenase (decarboxylating) activity"/>
    <property type="evidence" value="ECO:0007669"/>
    <property type="project" value="UniProtKB-EC"/>
</dbReference>
<dbReference type="GO" id="GO:0030170">
    <property type="term" value="F:pyridoxal phosphate binding"/>
    <property type="evidence" value="ECO:0007669"/>
    <property type="project" value="TreeGrafter"/>
</dbReference>
<dbReference type="GO" id="GO:0019464">
    <property type="term" value="P:glycine decarboxylation via glycine cleavage system"/>
    <property type="evidence" value="ECO:0007669"/>
    <property type="project" value="UniProtKB-UniRule"/>
</dbReference>
<dbReference type="CDD" id="cd00613">
    <property type="entry name" value="GDC-P"/>
    <property type="match status" value="2"/>
</dbReference>
<dbReference type="FunFam" id="3.40.640.10:FF:000005">
    <property type="entry name" value="Glycine dehydrogenase (decarboxylating), mitochondrial"/>
    <property type="match status" value="1"/>
</dbReference>
<dbReference type="FunFam" id="3.90.1150.10:FF:000007">
    <property type="entry name" value="Glycine dehydrogenase (decarboxylating), mitochondrial"/>
    <property type="match status" value="1"/>
</dbReference>
<dbReference type="FunFam" id="3.40.640.10:FF:000007">
    <property type="entry name" value="glycine dehydrogenase (Decarboxylating), mitochondrial"/>
    <property type="match status" value="1"/>
</dbReference>
<dbReference type="Gene3D" id="3.90.1150.10">
    <property type="entry name" value="Aspartate Aminotransferase, domain 1"/>
    <property type="match status" value="1"/>
</dbReference>
<dbReference type="Gene3D" id="3.40.640.10">
    <property type="entry name" value="Type I PLP-dependent aspartate aminotransferase-like (Major domain)"/>
    <property type="match status" value="2"/>
</dbReference>
<dbReference type="HAMAP" id="MF_00711">
    <property type="entry name" value="GcvP"/>
    <property type="match status" value="1"/>
</dbReference>
<dbReference type="InterPro" id="IPR003437">
    <property type="entry name" value="GcvP"/>
</dbReference>
<dbReference type="InterPro" id="IPR049316">
    <property type="entry name" value="GDC-P_C"/>
</dbReference>
<dbReference type="InterPro" id="IPR049315">
    <property type="entry name" value="GDC-P_N"/>
</dbReference>
<dbReference type="InterPro" id="IPR020581">
    <property type="entry name" value="GDC_P"/>
</dbReference>
<dbReference type="InterPro" id="IPR015424">
    <property type="entry name" value="PyrdxlP-dep_Trfase"/>
</dbReference>
<dbReference type="InterPro" id="IPR015421">
    <property type="entry name" value="PyrdxlP-dep_Trfase_major"/>
</dbReference>
<dbReference type="InterPro" id="IPR015422">
    <property type="entry name" value="PyrdxlP-dep_Trfase_small"/>
</dbReference>
<dbReference type="NCBIfam" id="TIGR00461">
    <property type="entry name" value="gcvP"/>
    <property type="match status" value="1"/>
</dbReference>
<dbReference type="NCBIfam" id="NF003346">
    <property type="entry name" value="PRK04366.1"/>
    <property type="match status" value="1"/>
</dbReference>
<dbReference type="PANTHER" id="PTHR11773:SF13">
    <property type="entry name" value="GLYCINE DEHYDROGENASE (DECARBOXYLATING)"/>
    <property type="match status" value="1"/>
</dbReference>
<dbReference type="PANTHER" id="PTHR11773">
    <property type="entry name" value="GLYCINE DEHYDROGENASE, DECARBOXYLATING"/>
    <property type="match status" value="1"/>
</dbReference>
<dbReference type="Pfam" id="PF21478">
    <property type="entry name" value="GcvP2_C"/>
    <property type="match status" value="1"/>
</dbReference>
<dbReference type="Pfam" id="PF02347">
    <property type="entry name" value="GDC-P"/>
    <property type="match status" value="2"/>
</dbReference>
<dbReference type="SUPFAM" id="SSF53383">
    <property type="entry name" value="PLP-dependent transferases"/>
    <property type="match status" value="2"/>
</dbReference>
<keyword id="KW-0560">Oxidoreductase</keyword>
<keyword id="KW-0663">Pyridoxal phosphate</keyword>
<evidence type="ECO:0000255" key="1">
    <source>
        <dbReference type="HAMAP-Rule" id="MF_00711"/>
    </source>
</evidence>
<accession>A0L103</accession>